<proteinExistence type="evidence at protein level"/>
<feature type="chain" id="PRO_0000394752" description="Tubulin beta-4B chain">
    <location>
        <begin position="1"/>
        <end position="290" status="greater than"/>
    </location>
</feature>
<feature type="short sequence motif" description="MREI motif" evidence="1">
    <location>
        <begin position="1"/>
        <end position="4"/>
    </location>
</feature>
<feature type="binding site" evidence="5">
    <location>
        <position position="11"/>
    </location>
    <ligand>
        <name>GTP</name>
        <dbReference type="ChEBI" id="CHEBI:37565"/>
    </ligand>
</feature>
<feature type="binding site" evidence="2">
    <location>
        <position position="69"/>
    </location>
    <ligand>
        <name>GTP</name>
        <dbReference type="ChEBI" id="CHEBI:37565"/>
    </ligand>
</feature>
<feature type="binding site" evidence="2">
    <location>
        <position position="69"/>
    </location>
    <ligand>
        <name>Mg(2+)</name>
        <dbReference type="ChEBI" id="CHEBI:18420"/>
    </ligand>
</feature>
<feature type="binding site" evidence="5">
    <location>
        <position position="138"/>
    </location>
    <ligand>
        <name>GTP</name>
        <dbReference type="ChEBI" id="CHEBI:37565"/>
    </ligand>
</feature>
<feature type="binding site" evidence="5">
    <location>
        <position position="142"/>
    </location>
    <ligand>
        <name>GTP</name>
        <dbReference type="ChEBI" id="CHEBI:37565"/>
    </ligand>
</feature>
<feature type="binding site" evidence="5">
    <location>
        <position position="143"/>
    </location>
    <ligand>
        <name>GTP</name>
        <dbReference type="ChEBI" id="CHEBI:37565"/>
    </ligand>
</feature>
<feature type="binding site" evidence="5">
    <location>
        <position position="144"/>
    </location>
    <ligand>
        <name>GTP</name>
        <dbReference type="ChEBI" id="CHEBI:37565"/>
    </ligand>
</feature>
<feature type="binding site" evidence="5">
    <location>
        <position position="172"/>
    </location>
    <ligand>
        <name>GTP</name>
        <dbReference type="ChEBI" id="CHEBI:37565"/>
    </ligand>
</feature>
<feature type="modified residue" description="Phosphothreonine" evidence="3">
    <location>
        <position position="55"/>
    </location>
</feature>
<feature type="modified residue" description="N6-acetyllysine" evidence="3">
    <location>
        <position position="58"/>
    </location>
</feature>
<feature type="non-consecutive residues" evidence="8">
    <location>
        <begin position="162"/>
        <end position="163"/>
    </location>
</feature>
<feature type="non-consecutive residues" evidence="8">
    <location>
        <begin position="222"/>
        <end position="223"/>
    </location>
</feature>
<feature type="non-consecutive residues" evidence="8">
    <location>
        <begin position="237"/>
        <end position="238"/>
    </location>
</feature>
<feature type="non-consecutive residues" evidence="8">
    <location>
        <begin position="249"/>
        <end position="250"/>
    </location>
</feature>
<feature type="non-terminal residue">
    <location>
        <position position="290"/>
    </location>
</feature>
<accession>P86221</accession>
<sequence length="290" mass="31916">MREIVHLQAGQCGNQIGAKFWEVISDEHGIDPTGTYHGDSDLQLERINVYYNEATGGKYVPRAVLVDLEPGTMDSVRSGPFGQIFRPDNFVFGQSGAGNNWAKGHYTEGAELVDSVLDVVRKEAESCDCLQGFQLTHSLGGGTGSGMGTLLISKIREEYPDRLTTPTYGDLNHLVSATMSGVTTCLRFPGQLNADLRKLAVNMVPFPRLHFFMPGFAPLTSRALTVPELTQQMFDAKHGRYLTVAAVFRTAVCDIPPRGLKMSATFIGNSTAIQELFKRISEQFTAMFRR</sequence>
<keyword id="KW-0007">Acetylation</keyword>
<keyword id="KW-0966">Cell projection</keyword>
<keyword id="KW-0969">Cilium</keyword>
<keyword id="KW-0963">Cytoplasm</keyword>
<keyword id="KW-0206">Cytoskeleton</keyword>
<keyword id="KW-0282">Flagellum</keyword>
<keyword id="KW-0342">GTP-binding</keyword>
<keyword id="KW-0460">Magnesium</keyword>
<keyword id="KW-0479">Metal-binding</keyword>
<keyword id="KW-0493">Microtubule</keyword>
<keyword id="KW-0547">Nucleotide-binding</keyword>
<keyword id="KW-0597">Phosphoprotein</keyword>
<keyword id="KW-1185">Reference proteome</keyword>
<evidence type="ECO:0000250" key="1">
    <source>
        <dbReference type="UniProtKB" id="P07437"/>
    </source>
</evidence>
<evidence type="ECO:0000250" key="2">
    <source>
        <dbReference type="UniProtKB" id="P68363"/>
    </source>
</evidence>
<evidence type="ECO:0000250" key="3">
    <source>
        <dbReference type="UniProtKB" id="P68371"/>
    </source>
</evidence>
<evidence type="ECO:0000250" key="4">
    <source>
        <dbReference type="UniProtKB" id="P68372"/>
    </source>
</evidence>
<evidence type="ECO:0000250" key="5">
    <source>
        <dbReference type="UniProtKB" id="Q13509"/>
    </source>
</evidence>
<evidence type="ECO:0000250" key="6">
    <source>
        <dbReference type="UniProtKB" id="Q71U36"/>
    </source>
</evidence>
<evidence type="ECO:0000255" key="7"/>
<evidence type="ECO:0000305" key="8"/>
<gene>
    <name type="primary">TUBB4B</name>
    <name type="synonym">TUBB2C</name>
</gene>
<comment type="function">
    <text>Tubulin is the major constituent of microtubules, a cylinder consisting of laterally associated linear protofilaments composed of alpha- and beta-tubulin heterodimers. Microtubules grow by the addition of GTP-tubulin dimers to the microtubule end, where a stabilizing cap forms. Below the cap, tubulin dimers are in GDP-bound state, owing to GTPase activity of alpha-tubulin.</text>
</comment>
<comment type="cofactor">
    <cofactor evidence="2">
        <name>Mg(2+)</name>
        <dbReference type="ChEBI" id="CHEBI:18420"/>
    </cofactor>
</comment>
<comment type="subunit">
    <text evidence="4">Dimer of alpha and beta chains. A typical microtubule is a hollow water-filled tube with an outer diameter of 25 nm and an inner diameter of 15 nM. Alpha-beta heterodimers associate head-to-tail to form protofilaments running lengthwise along the microtubule wall with the beta-tubulin subunit facing the microtubule plus end conferring a structural polarity. Microtubules usually have 13 protofilaments but different protofilament numbers can be found in some organisms and specialized cells. Component of sperm flagellar doublet microtubules.</text>
</comment>
<comment type="subcellular location">
    <subcellularLocation>
        <location evidence="4">Cytoplasm</location>
        <location evidence="4">Cytoskeleton</location>
    </subcellularLocation>
    <subcellularLocation>
        <location evidence="4">Cytoplasm</location>
        <location evidence="4">Cytoskeleton</location>
        <location evidence="4">Flagellum axoneme</location>
    </subcellularLocation>
</comment>
<comment type="domain">
    <text evidence="4">The highly acidic C-terminal region may bind cations such as calcium.</text>
</comment>
<comment type="domain">
    <text evidence="1">The MREI motif is common among all beta-tubulin isoforms and may be critical for tubulin autoregulation.</text>
</comment>
<comment type="PTM">
    <text evidence="4">Some glutamate residues at the C-terminus are polyglycylated, resulting in polyglycine chains on the gamma-carboxyl group. Glycylation is mainly limited to tubulin incorporated into axonemes (cilia and flagella) whereas glutamylation is prevalent in neuronal cells, centrioles, axonemes, and the mitotic spindle. Both modifications can coexist on the same protein on adjacent residues, and lowering polyglycylation levels increases polyglutamylation, and reciprocally. Cilia and flagella glycylation is required for their stability and maintenance. Flagella glycylation controls sperm motility.</text>
</comment>
<comment type="PTM">
    <text evidence="4 6">Some glutamate residues at the C-terminus are polyglutamylated, resulting in polyglutamate chains on the gamma-carboxyl group (By similarity). Polyglutamylation plays a key role in microtubule severing by spastin (SPAST). SPAST preferentially recognizes and acts on microtubules decorated with short polyglutamate tails: severing activity by SPAST increases as the number of glutamates per tubulin rises from one to eight, but decreases beyond this glutamylation threshold (By similarity). Glutamylation is also involved in cilia motility (By similarity).</text>
</comment>
<comment type="similarity">
    <text evidence="7">Belongs to the tubulin family.</text>
</comment>
<dbReference type="SMR" id="P86221"/>
<dbReference type="STRING" id="10036.ENSMAUP00000019894"/>
<dbReference type="Proteomes" id="UP000189706">
    <property type="component" value="Unplaced"/>
</dbReference>
<dbReference type="GO" id="GO:0005737">
    <property type="term" value="C:cytoplasm"/>
    <property type="evidence" value="ECO:0007669"/>
    <property type="project" value="UniProtKB-KW"/>
</dbReference>
<dbReference type="GO" id="GO:0005874">
    <property type="term" value="C:microtubule"/>
    <property type="evidence" value="ECO:0007669"/>
    <property type="project" value="UniProtKB-KW"/>
</dbReference>
<dbReference type="GO" id="GO:0031514">
    <property type="term" value="C:motile cilium"/>
    <property type="evidence" value="ECO:0007669"/>
    <property type="project" value="UniProtKB-KW"/>
</dbReference>
<dbReference type="GO" id="GO:0005525">
    <property type="term" value="F:GTP binding"/>
    <property type="evidence" value="ECO:0007669"/>
    <property type="project" value="UniProtKB-KW"/>
</dbReference>
<dbReference type="GO" id="GO:0003924">
    <property type="term" value="F:GTPase activity"/>
    <property type="evidence" value="ECO:0007669"/>
    <property type="project" value="InterPro"/>
</dbReference>
<dbReference type="GO" id="GO:0046872">
    <property type="term" value="F:metal ion binding"/>
    <property type="evidence" value="ECO:0007669"/>
    <property type="project" value="UniProtKB-KW"/>
</dbReference>
<dbReference type="GO" id="GO:0005200">
    <property type="term" value="F:structural constituent of cytoskeleton"/>
    <property type="evidence" value="ECO:0007669"/>
    <property type="project" value="InterPro"/>
</dbReference>
<dbReference type="GO" id="GO:0007017">
    <property type="term" value="P:microtubule-based process"/>
    <property type="evidence" value="ECO:0007669"/>
    <property type="project" value="InterPro"/>
</dbReference>
<dbReference type="CDD" id="cd02187">
    <property type="entry name" value="beta_tubulin"/>
    <property type="match status" value="1"/>
</dbReference>
<dbReference type="FunFam" id="3.40.50.1440:FF:000031">
    <property type="entry name" value="tubulin beta-4A chain isoform X5"/>
    <property type="match status" value="1"/>
</dbReference>
<dbReference type="Gene3D" id="3.40.50.1440">
    <property type="entry name" value="Tubulin/FtsZ, GTPase domain"/>
    <property type="match status" value="2"/>
</dbReference>
<dbReference type="InterPro" id="IPR013838">
    <property type="entry name" value="Beta-tubulin_BS"/>
</dbReference>
<dbReference type="InterPro" id="IPR002453">
    <property type="entry name" value="Beta_tubulin"/>
</dbReference>
<dbReference type="InterPro" id="IPR008280">
    <property type="entry name" value="Tub_FtsZ_C"/>
</dbReference>
<dbReference type="InterPro" id="IPR000217">
    <property type="entry name" value="Tubulin"/>
</dbReference>
<dbReference type="InterPro" id="IPR018316">
    <property type="entry name" value="Tubulin/FtsZ_2-layer-sand-dom"/>
</dbReference>
<dbReference type="InterPro" id="IPR036525">
    <property type="entry name" value="Tubulin/FtsZ_GTPase_sf"/>
</dbReference>
<dbReference type="InterPro" id="IPR017975">
    <property type="entry name" value="Tubulin_CS"/>
</dbReference>
<dbReference type="InterPro" id="IPR003008">
    <property type="entry name" value="Tubulin_FtsZ_GTPase"/>
</dbReference>
<dbReference type="PANTHER" id="PTHR11588">
    <property type="entry name" value="TUBULIN"/>
    <property type="match status" value="1"/>
</dbReference>
<dbReference type="Pfam" id="PF00091">
    <property type="entry name" value="Tubulin"/>
    <property type="match status" value="1"/>
</dbReference>
<dbReference type="PRINTS" id="PR01163">
    <property type="entry name" value="BETATUBULIN"/>
</dbReference>
<dbReference type="PRINTS" id="PR01161">
    <property type="entry name" value="TUBULIN"/>
</dbReference>
<dbReference type="SMART" id="SM00864">
    <property type="entry name" value="Tubulin"/>
    <property type="match status" value="1"/>
</dbReference>
<dbReference type="SMART" id="SM00865">
    <property type="entry name" value="Tubulin_C"/>
    <property type="match status" value="1"/>
</dbReference>
<dbReference type="SUPFAM" id="SSF55307">
    <property type="entry name" value="Tubulin C-terminal domain-like"/>
    <property type="match status" value="1"/>
</dbReference>
<dbReference type="SUPFAM" id="SSF52490">
    <property type="entry name" value="Tubulin nucleotide-binding domain-like"/>
    <property type="match status" value="1"/>
</dbReference>
<dbReference type="PROSITE" id="PS00227">
    <property type="entry name" value="TUBULIN"/>
    <property type="match status" value="1"/>
</dbReference>
<dbReference type="PROSITE" id="PS00228">
    <property type="entry name" value="TUBULIN_B_AUTOREG"/>
    <property type="match status" value="1"/>
</dbReference>
<organism>
    <name type="scientific">Mesocricetus auratus</name>
    <name type="common">Golden hamster</name>
    <dbReference type="NCBI Taxonomy" id="10036"/>
    <lineage>
        <taxon>Eukaryota</taxon>
        <taxon>Metazoa</taxon>
        <taxon>Chordata</taxon>
        <taxon>Craniata</taxon>
        <taxon>Vertebrata</taxon>
        <taxon>Euteleostomi</taxon>
        <taxon>Mammalia</taxon>
        <taxon>Eutheria</taxon>
        <taxon>Euarchontoglires</taxon>
        <taxon>Glires</taxon>
        <taxon>Rodentia</taxon>
        <taxon>Myomorpha</taxon>
        <taxon>Muroidea</taxon>
        <taxon>Cricetidae</taxon>
        <taxon>Cricetinae</taxon>
        <taxon>Mesocricetus</taxon>
    </lineage>
</organism>
<reference key="1">
    <citation type="journal article" date="2010" name="Asian J. Androl.">
        <title>Glucose-regulated protein precursor (GRP78) and tumor rejection antigen (GP96) are unique to hamster caput epididymal spermatozoa.</title>
        <authorList>
            <person name="Kameshwari D.B."/>
            <person name="Bhande S."/>
            <person name="Sundaram C.S."/>
            <person name="Kota V."/>
            <person name="Siva A.B."/>
            <person name="Shivaji S."/>
        </authorList>
    </citation>
    <scope>IDENTIFICATION BY MASS SPECTROMETRY</scope>
</reference>
<protein>
    <recommendedName>
        <fullName>Tubulin beta-4B chain</fullName>
    </recommendedName>
    <alternativeName>
        <fullName evidence="4">Tubulin beta-2C chain</fullName>
    </alternativeName>
</protein>
<name>TBB4B_MESAU</name>